<feature type="chain" id="PRO_0000062545" description="Ribulose bisphosphate carboxylase large chain">
    <location>
        <begin position="1" status="less than"/>
        <end position="394" status="greater than"/>
    </location>
</feature>
<feature type="active site" description="Proton acceptor" evidence="1">
    <location>
        <position position="166"/>
    </location>
</feature>
<feature type="active site" description="Proton acceptor" evidence="1">
    <location>
        <position position="285"/>
    </location>
</feature>
<feature type="binding site" description="in homodimeric partner" evidence="1">
    <location>
        <position position="114"/>
    </location>
    <ligand>
        <name>substrate</name>
    </ligand>
</feature>
<feature type="binding site" evidence="1">
    <location>
        <position position="164"/>
    </location>
    <ligand>
        <name>substrate</name>
    </ligand>
</feature>
<feature type="binding site" evidence="1">
    <location>
        <position position="168"/>
    </location>
    <ligand>
        <name>substrate</name>
    </ligand>
</feature>
<feature type="binding site" description="via carbamate group" evidence="2">
    <location>
        <position position="192"/>
    </location>
    <ligand>
        <name>Mg(2+)</name>
        <dbReference type="ChEBI" id="CHEBI:18420"/>
    </ligand>
</feature>
<feature type="binding site" evidence="2">
    <location>
        <position position="194"/>
    </location>
    <ligand>
        <name>Mg(2+)</name>
        <dbReference type="ChEBI" id="CHEBI:18420"/>
    </ligand>
</feature>
<feature type="binding site" evidence="2">
    <location>
        <position position="195"/>
    </location>
    <ligand>
        <name>Mg(2+)</name>
        <dbReference type="ChEBI" id="CHEBI:18420"/>
    </ligand>
</feature>
<feature type="binding site" evidence="1">
    <location>
        <position position="286"/>
    </location>
    <ligand>
        <name>substrate</name>
    </ligand>
</feature>
<feature type="binding site" evidence="1">
    <location>
        <position position="318"/>
    </location>
    <ligand>
        <name>substrate</name>
    </ligand>
</feature>
<feature type="binding site" evidence="1">
    <location>
        <position position="370"/>
    </location>
    <ligand>
        <name>substrate</name>
    </ligand>
</feature>
<feature type="site" description="Transition state stabilizer" evidence="1">
    <location>
        <position position="325"/>
    </location>
</feature>
<feature type="modified residue" description="N6,N6,N6-trimethyllysine" evidence="1">
    <location>
        <position position="5"/>
    </location>
</feature>
<feature type="modified residue" description="N6-carboxylysine" evidence="2">
    <location>
        <position position="192"/>
    </location>
</feature>
<feature type="non-terminal residue">
    <location>
        <position position="1"/>
    </location>
</feature>
<feature type="non-terminal residue">
    <location>
        <position position="394"/>
    </location>
</feature>
<proteinExistence type="inferred from homology"/>
<comment type="function">
    <text evidence="1">RuBisCO catalyzes two reactions: the carboxylation of D-ribulose 1,5-bisphosphate, the primary event in carbon dioxide fixation, as well as the oxidative fragmentation of the pentose substrate in the photorespiration process. Both reactions occur simultaneously and in competition at the same active site (By similarity).</text>
</comment>
<comment type="catalytic activity">
    <reaction>
        <text>2 (2R)-3-phosphoglycerate + 2 H(+) = D-ribulose 1,5-bisphosphate + CO2 + H2O</text>
        <dbReference type="Rhea" id="RHEA:23124"/>
        <dbReference type="ChEBI" id="CHEBI:15377"/>
        <dbReference type="ChEBI" id="CHEBI:15378"/>
        <dbReference type="ChEBI" id="CHEBI:16526"/>
        <dbReference type="ChEBI" id="CHEBI:57870"/>
        <dbReference type="ChEBI" id="CHEBI:58272"/>
        <dbReference type="EC" id="4.1.1.39"/>
    </reaction>
</comment>
<comment type="catalytic activity">
    <reaction>
        <text>D-ribulose 1,5-bisphosphate + O2 = 2-phosphoglycolate + (2R)-3-phosphoglycerate + 2 H(+)</text>
        <dbReference type="Rhea" id="RHEA:36631"/>
        <dbReference type="ChEBI" id="CHEBI:15378"/>
        <dbReference type="ChEBI" id="CHEBI:15379"/>
        <dbReference type="ChEBI" id="CHEBI:57870"/>
        <dbReference type="ChEBI" id="CHEBI:58033"/>
        <dbReference type="ChEBI" id="CHEBI:58272"/>
    </reaction>
</comment>
<comment type="cofactor">
    <cofactor evidence="1">
        <name>Mg(2+)</name>
        <dbReference type="ChEBI" id="CHEBI:18420"/>
    </cofactor>
    <text evidence="1">Binds 1 Mg(2+) ion per subunit.</text>
</comment>
<comment type="subunit">
    <text evidence="1">Heterohexadecamer of 8 large chains and 8 small chains.</text>
</comment>
<comment type="subcellular location">
    <subcellularLocation>
        <location>Plastid</location>
        <location>Chloroplast</location>
    </subcellularLocation>
</comment>
<comment type="miscellaneous">
    <text evidence="1">The basic functional RuBisCO is composed of a large chain homodimer in a 'head-to-tail' conformation. In form I RuBisCO this homodimer is arranged in a barrel-like tetramer with the small subunits forming a tetrameric 'cap' on each end of the 'barrel' (By similarity).</text>
</comment>
<comment type="similarity">
    <text evidence="3">Belongs to the RuBisCO large chain family. Type I subfamily.</text>
</comment>
<name>RBL_NYMOD</name>
<organism>
    <name type="scientific">Nymphaea odorata</name>
    <name type="common">White water lily</name>
    <dbReference type="NCBI Taxonomy" id="4419"/>
    <lineage>
        <taxon>Eukaryota</taxon>
        <taxon>Viridiplantae</taxon>
        <taxon>Streptophyta</taxon>
        <taxon>Embryophyta</taxon>
        <taxon>Tracheophyta</taxon>
        <taxon>Spermatophyta</taxon>
        <taxon>Magnoliopsida</taxon>
        <taxon>Nymphaeales</taxon>
        <taxon>Nymphaeaceae</taxon>
        <taxon>Nymphaea</taxon>
    </lineage>
</organism>
<accession>Q05802</accession>
<reference key="1">
    <citation type="journal article" date="1991" name="Proc. Natl. Acad. Sci. U.S.A.">
        <title>Molecular evolutionary history of ancient aquatic angiosperms.</title>
        <authorList>
            <person name="Les D.H."/>
            <person name="Garvin D.K."/>
            <person name="Wimpee C.F."/>
        </authorList>
    </citation>
    <scope>NUCLEOTIDE SEQUENCE [GENOMIC DNA]</scope>
</reference>
<sequence>SVGFKAGVKDYRLTYYTPEYETLATDILAAFRVTPQPGVPPEEAGAAVAAESSTGTWTTVWTDGLTSLDRYKGRCYHIEPVAGEENQYIAYVAYPLDLFEEGSVTNMFTSIVGNVFGFKALRALRLEDLRIPPAYSKTFQGPPHGIQVERDKLNKYGRPLLGCTIKPKLGLSAKNYGRAVYECLRGGLDFTKDDENVNSQPFMRWRDRFLFCAEALYKAQAETGEIKGHYLNATAGTSEEMIKRAVCARELGVPIVMHDYLTGGFTANTSLAHYCRDNGLLLHIHRAMHAVIDRQRNHGIHFRVLAKALRMSGGDHIHSGTVVGKLEGERDVTLGFVDLLRDDFIEKDRSRGIYFTQDWVSMPGVLPVASGGIHVWHMPALTEIFGDDSVLQFG</sequence>
<geneLocation type="chloroplast"/>
<keyword id="KW-0113">Calvin cycle</keyword>
<keyword id="KW-0120">Carbon dioxide fixation</keyword>
<keyword id="KW-0150">Chloroplast</keyword>
<keyword id="KW-0456">Lyase</keyword>
<keyword id="KW-0460">Magnesium</keyword>
<keyword id="KW-0479">Metal-binding</keyword>
<keyword id="KW-0488">Methylation</keyword>
<keyword id="KW-0503">Monooxygenase</keyword>
<keyword id="KW-0560">Oxidoreductase</keyword>
<keyword id="KW-0601">Photorespiration</keyword>
<keyword id="KW-0602">Photosynthesis</keyword>
<keyword id="KW-0934">Plastid</keyword>
<gene>
    <name type="primary">rbcL</name>
</gene>
<protein>
    <recommendedName>
        <fullName>Ribulose bisphosphate carboxylase large chain</fullName>
        <shortName>RuBisCO large subunit</shortName>
        <ecNumber>4.1.1.39</ecNumber>
    </recommendedName>
</protein>
<dbReference type="EC" id="4.1.1.39"/>
<dbReference type="EMBL" id="M77034">
    <property type="protein sequence ID" value="AAA84529.1"/>
    <property type="molecule type" value="Genomic_DNA"/>
</dbReference>
<dbReference type="SMR" id="Q05802"/>
<dbReference type="GO" id="GO:0009507">
    <property type="term" value="C:chloroplast"/>
    <property type="evidence" value="ECO:0007669"/>
    <property type="project" value="UniProtKB-SubCell"/>
</dbReference>
<dbReference type="GO" id="GO:0000287">
    <property type="term" value="F:magnesium ion binding"/>
    <property type="evidence" value="ECO:0007669"/>
    <property type="project" value="InterPro"/>
</dbReference>
<dbReference type="GO" id="GO:0004497">
    <property type="term" value="F:monooxygenase activity"/>
    <property type="evidence" value="ECO:0007669"/>
    <property type="project" value="UniProtKB-KW"/>
</dbReference>
<dbReference type="GO" id="GO:0016984">
    <property type="term" value="F:ribulose-bisphosphate carboxylase activity"/>
    <property type="evidence" value="ECO:0007669"/>
    <property type="project" value="UniProtKB-EC"/>
</dbReference>
<dbReference type="GO" id="GO:0009853">
    <property type="term" value="P:photorespiration"/>
    <property type="evidence" value="ECO:0007669"/>
    <property type="project" value="UniProtKB-KW"/>
</dbReference>
<dbReference type="GO" id="GO:0019253">
    <property type="term" value="P:reductive pentose-phosphate cycle"/>
    <property type="evidence" value="ECO:0007669"/>
    <property type="project" value="UniProtKB-KW"/>
</dbReference>
<dbReference type="FunFam" id="3.20.20.110:FF:000003">
    <property type="entry name" value="Ribulose bisphosphate carboxylase large chain"/>
    <property type="match status" value="1"/>
</dbReference>
<dbReference type="FunFam" id="3.30.70.150:FF:000001">
    <property type="entry name" value="Ribulose bisphosphate carboxylase large chain"/>
    <property type="match status" value="1"/>
</dbReference>
<dbReference type="Gene3D" id="3.20.20.110">
    <property type="entry name" value="Ribulose bisphosphate carboxylase, large subunit, C-terminal domain"/>
    <property type="match status" value="1"/>
</dbReference>
<dbReference type="Gene3D" id="3.30.70.150">
    <property type="entry name" value="RuBisCO large subunit, N-terminal domain"/>
    <property type="match status" value="1"/>
</dbReference>
<dbReference type="InterPro" id="IPR033966">
    <property type="entry name" value="RuBisCO"/>
</dbReference>
<dbReference type="InterPro" id="IPR020878">
    <property type="entry name" value="RuBisCo_large_chain_AS"/>
</dbReference>
<dbReference type="InterPro" id="IPR000685">
    <property type="entry name" value="RuBisCO_lsu_C"/>
</dbReference>
<dbReference type="InterPro" id="IPR036376">
    <property type="entry name" value="RuBisCO_lsu_C_sf"/>
</dbReference>
<dbReference type="InterPro" id="IPR017443">
    <property type="entry name" value="RuBisCO_lsu_fd_N"/>
</dbReference>
<dbReference type="InterPro" id="IPR036422">
    <property type="entry name" value="RuBisCO_lsu_N_sf"/>
</dbReference>
<dbReference type="NCBIfam" id="NF003252">
    <property type="entry name" value="PRK04208.1"/>
    <property type="match status" value="1"/>
</dbReference>
<dbReference type="PANTHER" id="PTHR42704">
    <property type="entry name" value="RIBULOSE BISPHOSPHATE CARBOXYLASE"/>
    <property type="match status" value="1"/>
</dbReference>
<dbReference type="PANTHER" id="PTHR42704:SF19">
    <property type="entry name" value="RIBULOSE BISPHOSPHATE CARBOXYLASE LARGE CHAIN"/>
    <property type="match status" value="1"/>
</dbReference>
<dbReference type="Pfam" id="PF00016">
    <property type="entry name" value="RuBisCO_large"/>
    <property type="match status" value="1"/>
</dbReference>
<dbReference type="Pfam" id="PF02788">
    <property type="entry name" value="RuBisCO_large_N"/>
    <property type="match status" value="1"/>
</dbReference>
<dbReference type="SFLD" id="SFLDS00014">
    <property type="entry name" value="RuBisCO"/>
    <property type="match status" value="1"/>
</dbReference>
<dbReference type="SFLD" id="SFLDG00301">
    <property type="entry name" value="RuBisCO-like_proteins"/>
    <property type="match status" value="1"/>
</dbReference>
<dbReference type="SUPFAM" id="SSF51649">
    <property type="entry name" value="RuBisCo, C-terminal domain"/>
    <property type="match status" value="1"/>
</dbReference>
<dbReference type="SUPFAM" id="SSF54966">
    <property type="entry name" value="RuBisCO, large subunit, small (N-terminal) domain"/>
    <property type="match status" value="1"/>
</dbReference>
<dbReference type="PROSITE" id="PS00157">
    <property type="entry name" value="RUBISCO_LARGE"/>
    <property type="match status" value="1"/>
</dbReference>
<evidence type="ECO:0000250" key="1"/>
<evidence type="ECO:0000255" key="2">
    <source>
        <dbReference type="PROSITE-ProRule" id="PRU10114"/>
    </source>
</evidence>
<evidence type="ECO:0000305" key="3"/>